<accession>Q6F0M9</accession>
<dbReference type="EMBL" id="AE017263">
    <property type="protein sequence ID" value="AAT75944.1"/>
    <property type="molecule type" value="Genomic_DNA"/>
</dbReference>
<dbReference type="RefSeq" id="WP_011183484.1">
    <property type="nucleotide sequence ID" value="NC_006055.1"/>
</dbReference>
<dbReference type="RefSeq" id="YP_053828.1">
    <property type="nucleotide sequence ID" value="NC_006055.1"/>
</dbReference>
<dbReference type="SMR" id="Q6F0M9"/>
<dbReference type="STRING" id="265311.Mfl586"/>
<dbReference type="PaxDb" id="265311-Mfl586"/>
<dbReference type="EnsemblBacteria" id="AAT75944">
    <property type="protein sequence ID" value="AAT75944"/>
    <property type="gene ID" value="Mfl586"/>
</dbReference>
<dbReference type="GeneID" id="2898028"/>
<dbReference type="KEGG" id="mfl:Mfl586"/>
<dbReference type="PATRIC" id="fig|265311.5.peg.590"/>
<dbReference type="eggNOG" id="COG0522">
    <property type="taxonomic scope" value="Bacteria"/>
</dbReference>
<dbReference type="HOGENOM" id="CLU_092403_0_1_14"/>
<dbReference type="OrthoDB" id="9803672at2"/>
<dbReference type="Proteomes" id="UP000006647">
    <property type="component" value="Chromosome"/>
</dbReference>
<dbReference type="GO" id="GO:0015935">
    <property type="term" value="C:small ribosomal subunit"/>
    <property type="evidence" value="ECO:0007669"/>
    <property type="project" value="InterPro"/>
</dbReference>
<dbReference type="GO" id="GO:0019843">
    <property type="term" value="F:rRNA binding"/>
    <property type="evidence" value="ECO:0007669"/>
    <property type="project" value="UniProtKB-UniRule"/>
</dbReference>
<dbReference type="GO" id="GO:0003735">
    <property type="term" value="F:structural constituent of ribosome"/>
    <property type="evidence" value="ECO:0007669"/>
    <property type="project" value="InterPro"/>
</dbReference>
<dbReference type="GO" id="GO:0042274">
    <property type="term" value="P:ribosomal small subunit biogenesis"/>
    <property type="evidence" value="ECO:0007669"/>
    <property type="project" value="TreeGrafter"/>
</dbReference>
<dbReference type="GO" id="GO:0006412">
    <property type="term" value="P:translation"/>
    <property type="evidence" value="ECO:0007669"/>
    <property type="project" value="UniProtKB-UniRule"/>
</dbReference>
<dbReference type="CDD" id="cd00165">
    <property type="entry name" value="S4"/>
    <property type="match status" value="1"/>
</dbReference>
<dbReference type="FunFam" id="3.10.290.10:FF:000001">
    <property type="entry name" value="30S ribosomal protein S4"/>
    <property type="match status" value="1"/>
</dbReference>
<dbReference type="Gene3D" id="1.10.1050.10">
    <property type="entry name" value="Ribosomal Protein S4 Delta 41, Chain A, domain 1"/>
    <property type="match status" value="1"/>
</dbReference>
<dbReference type="Gene3D" id="3.10.290.10">
    <property type="entry name" value="RNA-binding S4 domain"/>
    <property type="match status" value="1"/>
</dbReference>
<dbReference type="HAMAP" id="MF_01306_B">
    <property type="entry name" value="Ribosomal_uS4_B"/>
    <property type="match status" value="1"/>
</dbReference>
<dbReference type="InterPro" id="IPR022801">
    <property type="entry name" value="Ribosomal_uS4"/>
</dbReference>
<dbReference type="InterPro" id="IPR005709">
    <property type="entry name" value="Ribosomal_uS4_bac-type"/>
</dbReference>
<dbReference type="InterPro" id="IPR018079">
    <property type="entry name" value="Ribosomal_uS4_CS"/>
</dbReference>
<dbReference type="InterPro" id="IPR001912">
    <property type="entry name" value="Ribosomal_uS4_N"/>
</dbReference>
<dbReference type="InterPro" id="IPR002942">
    <property type="entry name" value="S4_RNA-bd"/>
</dbReference>
<dbReference type="InterPro" id="IPR036986">
    <property type="entry name" value="S4_RNA-bd_sf"/>
</dbReference>
<dbReference type="NCBIfam" id="NF003717">
    <property type="entry name" value="PRK05327.1"/>
    <property type="match status" value="1"/>
</dbReference>
<dbReference type="NCBIfam" id="TIGR01017">
    <property type="entry name" value="rpsD_bact"/>
    <property type="match status" value="1"/>
</dbReference>
<dbReference type="PANTHER" id="PTHR11831">
    <property type="entry name" value="30S 40S RIBOSOMAL PROTEIN"/>
    <property type="match status" value="1"/>
</dbReference>
<dbReference type="PANTHER" id="PTHR11831:SF4">
    <property type="entry name" value="SMALL RIBOSOMAL SUBUNIT PROTEIN US4M"/>
    <property type="match status" value="1"/>
</dbReference>
<dbReference type="Pfam" id="PF00163">
    <property type="entry name" value="Ribosomal_S4"/>
    <property type="match status" value="1"/>
</dbReference>
<dbReference type="Pfam" id="PF01479">
    <property type="entry name" value="S4"/>
    <property type="match status" value="1"/>
</dbReference>
<dbReference type="SMART" id="SM01390">
    <property type="entry name" value="Ribosomal_S4"/>
    <property type="match status" value="1"/>
</dbReference>
<dbReference type="SMART" id="SM00363">
    <property type="entry name" value="S4"/>
    <property type="match status" value="1"/>
</dbReference>
<dbReference type="SUPFAM" id="SSF55174">
    <property type="entry name" value="Alpha-L RNA-binding motif"/>
    <property type="match status" value="1"/>
</dbReference>
<dbReference type="PROSITE" id="PS00632">
    <property type="entry name" value="RIBOSOMAL_S4"/>
    <property type="match status" value="1"/>
</dbReference>
<dbReference type="PROSITE" id="PS50889">
    <property type="entry name" value="S4"/>
    <property type="match status" value="1"/>
</dbReference>
<organism>
    <name type="scientific">Mesoplasma florum (strain ATCC 33453 / NBRC 100688 / NCTC 11704 / L1)</name>
    <name type="common">Acholeplasma florum</name>
    <dbReference type="NCBI Taxonomy" id="265311"/>
    <lineage>
        <taxon>Bacteria</taxon>
        <taxon>Bacillati</taxon>
        <taxon>Mycoplasmatota</taxon>
        <taxon>Mollicutes</taxon>
        <taxon>Entomoplasmatales</taxon>
        <taxon>Entomoplasmataceae</taxon>
        <taxon>Mesoplasma</taxon>
    </lineage>
</organism>
<comment type="function">
    <text evidence="1">One of the primary rRNA binding proteins, it binds directly to 16S rRNA where it nucleates assembly of the body of the 30S subunit.</text>
</comment>
<comment type="function">
    <text evidence="1">With S5 and S12 plays an important role in translational accuracy.</text>
</comment>
<comment type="subunit">
    <text evidence="1">Part of the 30S ribosomal subunit. Contacts protein S5. The interaction surface between S4 and S5 is involved in control of translational fidelity.</text>
</comment>
<comment type="similarity">
    <text evidence="1">Belongs to the universal ribosomal protein uS4 family.</text>
</comment>
<evidence type="ECO:0000255" key="1">
    <source>
        <dbReference type="HAMAP-Rule" id="MF_01306"/>
    </source>
</evidence>
<evidence type="ECO:0000305" key="2"/>
<gene>
    <name evidence="1" type="primary">rpsD</name>
    <name type="ordered locus">Mfl586</name>
</gene>
<reference key="1">
    <citation type="submission" date="2004-06" db="EMBL/GenBank/DDBJ databases">
        <authorList>
            <person name="Birren B.W."/>
            <person name="Stange-Thomann N."/>
            <person name="Hafez N."/>
            <person name="DeCaprio D."/>
            <person name="Fisher S."/>
            <person name="Butler J."/>
            <person name="Elkins T."/>
            <person name="Kodira C.D."/>
            <person name="Major J."/>
            <person name="Wang S."/>
            <person name="Nicol R."/>
            <person name="Nusbaum C."/>
        </authorList>
    </citation>
    <scope>NUCLEOTIDE SEQUENCE [LARGE SCALE GENOMIC DNA]</scope>
    <source>
        <strain>ATCC 33453 / NBRC 100688 / NCTC 11704 / L1</strain>
    </source>
</reference>
<feature type="chain" id="PRO_0000132409" description="Small ribosomal subunit protein uS4">
    <location>
        <begin position="1"/>
        <end position="208"/>
    </location>
</feature>
<feature type="domain" description="S4 RNA-binding" evidence="1">
    <location>
        <begin position="97"/>
        <end position="160"/>
    </location>
</feature>
<proteinExistence type="inferred from homology"/>
<name>RS4_MESFL</name>
<keyword id="KW-1185">Reference proteome</keyword>
<keyword id="KW-0687">Ribonucleoprotein</keyword>
<keyword id="KW-0689">Ribosomal protein</keyword>
<keyword id="KW-0694">RNA-binding</keyword>
<keyword id="KW-0699">rRNA-binding</keyword>
<sequence>MSRYTGSTFKKARRYGFSILENGKEFSKGKKRVTTPGQHGKDKARLKMSGYGAQLQEKQKVKFMYGMTERQFRNTFAKAKKVHGGILGTNFLVLLESRLDNIVFRLGFAMTRQAARQLVNHGHILVNGKKLDIPSYQVKPGDSIEVKEAMKKNDKIAEALQNNESTVEFVKVDKANLKGQFVRLPERQELNLEINDALIVEWYNRLIK</sequence>
<protein>
    <recommendedName>
        <fullName evidence="1">Small ribosomal subunit protein uS4</fullName>
    </recommendedName>
    <alternativeName>
        <fullName evidence="2">30S ribosomal protein S4</fullName>
    </alternativeName>
</protein>